<comment type="function">
    <text evidence="1">Catalyzes the conversion of glucosamine-6-phosphate to glucosamine-1-phosphate.</text>
</comment>
<comment type="catalytic activity">
    <reaction evidence="1">
        <text>alpha-D-glucosamine 1-phosphate = D-glucosamine 6-phosphate</text>
        <dbReference type="Rhea" id="RHEA:23424"/>
        <dbReference type="ChEBI" id="CHEBI:58516"/>
        <dbReference type="ChEBI" id="CHEBI:58725"/>
        <dbReference type="EC" id="5.4.2.10"/>
    </reaction>
</comment>
<comment type="cofactor">
    <cofactor evidence="1">
        <name>Mg(2+)</name>
        <dbReference type="ChEBI" id="CHEBI:18420"/>
    </cofactor>
    <text evidence="1">Binds 1 Mg(2+) ion per subunit.</text>
</comment>
<comment type="PTM">
    <text evidence="1">Activated by phosphorylation.</text>
</comment>
<comment type="similarity">
    <text evidence="1">Belongs to the phosphohexose mutase family.</text>
</comment>
<reference key="1">
    <citation type="journal article" date="2009" name="Environ. Microbiol.">
        <title>Genome sequence of Desulfobacterium autotrophicum HRM2, a marine sulfate reducer oxidizing organic carbon completely to carbon dioxide.</title>
        <authorList>
            <person name="Strittmatter A.W."/>
            <person name="Liesegang H."/>
            <person name="Rabus R."/>
            <person name="Decker I."/>
            <person name="Amann J."/>
            <person name="Andres S."/>
            <person name="Henne A."/>
            <person name="Fricke W.F."/>
            <person name="Martinez-Arias R."/>
            <person name="Bartels D."/>
            <person name="Goesmann A."/>
            <person name="Krause L."/>
            <person name="Puehler A."/>
            <person name="Klenk H.P."/>
            <person name="Richter M."/>
            <person name="Schuler M."/>
            <person name="Gloeckner F.O."/>
            <person name="Meyerdierks A."/>
            <person name="Gottschalk G."/>
            <person name="Amann R."/>
        </authorList>
    </citation>
    <scope>NUCLEOTIDE SEQUENCE [LARGE SCALE GENOMIC DNA]</scope>
    <source>
        <strain>ATCC 43914 / DSM 3382 / VKM B-1955 / HRM2</strain>
    </source>
</reference>
<protein>
    <recommendedName>
        <fullName evidence="1">Phosphoglucosamine mutase</fullName>
        <ecNumber evidence="1">5.4.2.10</ecNumber>
    </recommendedName>
</protein>
<name>GLMM_DESAH</name>
<sequence length="463" mass="49305">MGKLFGTDGIRGFANIYPMTVEVALKTGRAVARFAKEHGGTVVIIGRDTRRSGDMLEAALAAGISSMGINVLEAGVIPTPGVAFLTATVKGAGAGVVISASHNPFHDNGIKVFKSGGLKLTDPEEAKIESYIFDAGPDRADSSICEPKTSDSAIEPGTISTISNASAQYANFLTSCYQRDLDKNTPDQPLKIVVDCSNGASFKVAPMVFPTLGFETQFIFDTPDGKNINHNCGSQHTETLAKRVISTGADLGLAFDGDADRLIAIDEQGVKLTGDKILAICANHAKAQGRLTNNLVITTVMSNIGLSKALERLGIDHIKTGVGDREVLKEMWATGAVMGGEDSGHMIFSEFHSTGDGILSALCLIRVMVDTNKSLSDLATIMTVYPQVLMNVEVDPSRPDFMKIETIAREIKRVEQALNSSGRVLVRYSGTQPLLRVMVEGPDLEATKSHCQSICDAIKQASI</sequence>
<gene>
    <name evidence="1" type="primary">glmM</name>
    <name type="ordered locus">HRM2_25140</name>
</gene>
<evidence type="ECO:0000255" key="1">
    <source>
        <dbReference type="HAMAP-Rule" id="MF_01554"/>
    </source>
</evidence>
<proteinExistence type="inferred from homology"/>
<dbReference type="EC" id="5.4.2.10" evidence="1"/>
<dbReference type="EMBL" id="CP001087">
    <property type="protein sequence ID" value="ACN15608.1"/>
    <property type="molecule type" value="Genomic_DNA"/>
</dbReference>
<dbReference type="RefSeq" id="WP_015904373.1">
    <property type="nucleotide sequence ID" value="NC_012108.1"/>
</dbReference>
<dbReference type="SMR" id="C0QGV9"/>
<dbReference type="STRING" id="177437.HRM2_25140"/>
<dbReference type="KEGG" id="dat:HRM2_25140"/>
<dbReference type="eggNOG" id="COG1109">
    <property type="taxonomic scope" value="Bacteria"/>
</dbReference>
<dbReference type="HOGENOM" id="CLU_016950_7_0_7"/>
<dbReference type="OrthoDB" id="9806956at2"/>
<dbReference type="Proteomes" id="UP000000442">
    <property type="component" value="Chromosome"/>
</dbReference>
<dbReference type="GO" id="GO:0005829">
    <property type="term" value="C:cytosol"/>
    <property type="evidence" value="ECO:0007669"/>
    <property type="project" value="TreeGrafter"/>
</dbReference>
<dbReference type="GO" id="GO:0000287">
    <property type="term" value="F:magnesium ion binding"/>
    <property type="evidence" value="ECO:0007669"/>
    <property type="project" value="UniProtKB-UniRule"/>
</dbReference>
<dbReference type="GO" id="GO:0008966">
    <property type="term" value="F:phosphoglucosamine mutase activity"/>
    <property type="evidence" value="ECO:0007669"/>
    <property type="project" value="UniProtKB-UniRule"/>
</dbReference>
<dbReference type="GO" id="GO:0004615">
    <property type="term" value="F:phosphomannomutase activity"/>
    <property type="evidence" value="ECO:0007669"/>
    <property type="project" value="TreeGrafter"/>
</dbReference>
<dbReference type="GO" id="GO:0005975">
    <property type="term" value="P:carbohydrate metabolic process"/>
    <property type="evidence" value="ECO:0007669"/>
    <property type="project" value="InterPro"/>
</dbReference>
<dbReference type="GO" id="GO:0009252">
    <property type="term" value="P:peptidoglycan biosynthetic process"/>
    <property type="evidence" value="ECO:0007669"/>
    <property type="project" value="TreeGrafter"/>
</dbReference>
<dbReference type="GO" id="GO:0006048">
    <property type="term" value="P:UDP-N-acetylglucosamine biosynthetic process"/>
    <property type="evidence" value="ECO:0007669"/>
    <property type="project" value="TreeGrafter"/>
</dbReference>
<dbReference type="CDD" id="cd05802">
    <property type="entry name" value="GlmM"/>
    <property type="match status" value="1"/>
</dbReference>
<dbReference type="FunFam" id="3.30.310.50:FF:000001">
    <property type="entry name" value="Phosphoglucosamine mutase"/>
    <property type="match status" value="1"/>
</dbReference>
<dbReference type="FunFam" id="3.40.120.10:FF:000001">
    <property type="entry name" value="Phosphoglucosamine mutase"/>
    <property type="match status" value="1"/>
</dbReference>
<dbReference type="FunFam" id="3.40.120.10:FF:000003">
    <property type="entry name" value="Phosphoglucosamine mutase"/>
    <property type="match status" value="1"/>
</dbReference>
<dbReference type="Gene3D" id="3.40.120.10">
    <property type="entry name" value="Alpha-D-Glucose-1,6-Bisphosphate, subunit A, domain 3"/>
    <property type="match status" value="3"/>
</dbReference>
<dbReference type="Gene3D" id="3.30.310.50">
    <property type="entry name" value="Alpha-D-phosphohexomutase, C-terminal domain"/>
    <property type="match status" value="1"/>
</dbReference>
<dbReference type="HAMAP" id="MF_01554_B">
    <property type="entry name" value="GlmM_B"/>
    <property type="match status" value="1"/>
</dbReference>
<dbReference type="InterPro" id="IPR005844">
    <property type="entry name" value="A-D-PHexomutase_a/b/a-I"/>
</dbReference>
<dbReference type="InterPro" id="IPR016055">
    <property type="entry name" value="A-D-PHexomutase_a/b/a-I/II/III"/>
</dbReference>
<dbReference type="InterPro" id="IPR005845">
    <property type="entry name" value="A-D-PHexomutase_a/b/a-II"/>
</dbReference>
<dbReference type="InterPro" id="IPR005846">
    <property type="entry name" value="A-D-PHexomutase_a/b/a-III"/>
</dbReference>
<dbReference type="InterPro" id="IPR005843">
    <property type="entry name" value="A-D-PHexomutase_C"/>
</dbReference>
<dbReference type="InterPro" id="IPR036900">
    <property type="entry name" value="A-D-PHexomutase_C_sf"/>
</dbReference>
<dbReference type="InterPro" id="IPR016066">
    <property type="entry name" value="A-D-PHexomutase_CS"/>
</dbReference>
<dbReference type="InterPro" id="IPR005841">
    <property type="entry name" value="Alpha-D-phosphohexomutase_SF"/>
</dbReference>
<dbReference type="InterPro" id="IPR006352">
    <property type="entry name" value="GlmM_bact"/>
</dbReference>
<dbReference type="InterPro" id="IPR050060">
    <property type="entry name" value="Phosphoglucosamine_mutase"/>
</dbReference>
<dbReference type="NCBIfam" id="TIGR01455">
    <property type="entry name" value="glmM"/>
    <property type="match status" value="1"/>
</dbReference>
<dbReference type="PANTHER" id="PTHR42946:SF1">
    <property type="entry name" value="PHOSPHOGLUCOMUTASE (ALPHA-D-GLUCOSE-1,6-BISPHOSPHATE-DEPENDENT)"/>
    <property type="match status" value="1"/>
</dbReference>
<dbReference type="PANTHER" id="PTHR42946">
    <property type="entry name" value="PHOSPHOHEXOSE MUTASE"/>
    <property type="match status" value="1"/>
</dbReference>
<dbReference type="Pfam" id="PF02878">
    <property type="entry name" value="PGM_PMM_I"/>
    <property type="match status" value="1"/>
</dbReference>
<dbReference type="Pfam" id="PF02879">
    <property type="entry name" value="PGM_PMM_II"/>
    <property type="match status" value="1"/>
</dbReference>
<dbReference type="Pfam" id="PF02880">
    <property type="entry name" value="PGM_PMM_III"/>
    <property type="match status" value="1"/>
</dbReference>
<dbReference type="Pfam" id="PF00408">
    <property type="entry name" value="PGM_PMM_IV"/>
    <property type="match status" value="1"/>
</dbReference>
<dbReference type="PRINTS" id="PR00509">
    <property type="entry name" value="PGMPMM"/>
</dbReference>
<dbReference type="SUPFAM" id="SSF55957">
    <property type="entry name" value="Phosphoglucomutase, C-terminal domain"/>
    <property type="match status" value="1"/>
</dbReference>
<dbReference type="SUPFAM" id="SSF53738">
    <property type="entry name" value="Phosphoglucomutase, first 3 domains"/>
    <property type="match status" value="3"/>
</dbReference>
<dbReference type="PROSITE" id="PS00710">
    <property type="entry name" value="PGM_PMM"/>
    <property type="match status" value="1"/>
</dbReference>
<accession>C0QGV9</accession>
<feature type="chain" id="PRO_1000215486" description="Phosphoglucosamine mutase">
    <location>
        <begin position="1"/>
        <end position="463"/>
    </location>
</feature>
<feature type="active site" description="Phosphoserine intermediate" evidence="1">
    <location>
        <position position="101"/>
    </location>
</feature>
<feature type="binding site" description="via phosphate group" evidence="1">
    <location>
        <position position="101"/>
    </location>
    <ligand>
        <name>Mg(2+)</name>
        <dbReference type="ChEBI" id="CHEBI:18420"/>
    </ligand>
</feature>
<feature type="binding site" evidence="1">
    <location>
        <position position="256"/>
    </location>
    <ligand>
        <name>Mg(2+)</name>
        <dbReference type="ChEBI" id="CHEBI:18420"/>
    </ligand>
</feature>
<feature type="binding site" evidence="1">
    <location>
        <position position="258"/>
    </location>
    <ligand>
        <name>Mg(2+)</name>
        <dbReference type="ChEBI" id="CHEBI:18420"/>
    </ligand>
</feature>
<feature type="binding site" evidence="1">
    <location>
        <position position="260"/>
    </location>
    <ligand>
        <name>Mg(2+)</name>
        <dbReference type="ChEBI" id="CHEBI:18420"/>
    </ligand>
</feature>
<feature type="modified residue" description="Phosphoserine" evidence="1">
    <location>
        <position position="101"/>
    </location>
</feature>
<keyword id="KW-0413">Isomerase</keyword>
<keyword id="KW-0460">Magnesium</keyword>
<keyword id="KW-0479">Metal-binding</keyword>
<keyword id="KW-0597">Phosphoprotein</keyword>
<keyword id="KW-1185">Reference proteome</keyword>
<organism>
    <name type="scientific">Desulforapulum autotrophicum (strain ATCC 43914 / DSM 3382 / VKM B-1955 / HRM2)</name>
    <name type="common">Desulfobacterium autotrophicum</name>
    <dbReference type="NCBI Taxonomy" id="177437"/>
    <lineage>
        <taxon>Bacteria</taxon>
        <taxon>Pseudomonadati</taxon>
        <taxon>Thermodesulfobacteriota</taxon>
        <taxon>Desulfobacteria</taxon>
        <taxon>Desulfobacterales</taxon>
        <taxon>Desulfobacteraceae</taxon>
        <taxon>Desulforapulum</taxon>
    </lineage>
</organism>